<reference key="1">
    <citation type="journal article" date="2003" name="Proc. Natl. Acad. Sci. U.S.A.">
        <title>Complete genome sequence of the Q-fever pathogen, Coxiella burnetii.</title>
        <authorList>
            <person name="Seshadri R."/>
            <person name="Paulsen I.T."/>
            <person name="Eisen J.A."/>
            <person name="Read T.D."/>
            <person name="Nelson K.E."/>
            <person name="Nelson W.C."/>
            <person name="Ward N.L."/>
            <person name="Tettelin H."/>
            <person name="Davidsen T.M."/>
            <person name="Beanan M.J."/>
            <person name="DeBoy R.T."/>
            <person name="Daugherty S.C."/>
            <person name="Brinkac L.M."/>
            <person name="Madupu R."/>
            <person name="Dodson R.J."/>
            <person name="Khouri H.M."/>
            <person name="Lee K.H."/>
            <person name="Carty H.A."/>
            <person name="Scanlan D."/>
            <person name="Heinzen R.A."/>
            <person name="Thompson H.A."/>
            <person name="Samuel J.E."/>
            <person name="Fraser C.M."/>
            <person name="Heidelberg J.F."/>
        </authorList>
    </citation>
    <scope>NUCLEOTIDE SEQUENCE [LARGE SCALE GENOMIC DNA]</scope>
    <source>
        <strain>RSA 493 / Nine Mile phase I</strain>
    </source>
</reference>
<gene>
    <name evidence="1" type="primary">lpxK</name>
    <name type="ordered locus">CBU_0857</name>
</gene>
<protein>
    <recommendedName>
        <fullName evidence="1">Tetraacyldisaccharide 4'-kinase</fullName>
        <ecNumber evidence="1">2.7.1.130</ecNumber>
    </recommendedName>
    <alternativeName>
        <fullName evidence="1">Lipid A 4'-kinase</fullName>
    </alternativeName>
</protein>
<sequence>MLKAPRFWYQPRSLLGGILSPFSFLYQIIVRIRRGLYAVGLKKISKFPVPIVIVGNITVGGSGKTPFVIWLANELKNRGFRPGVVSRGYGGKANRFPQTVTENSDPLQVGDEAVLLMKKIDCPMVVCRDRGAAVKHLLRNFQCDVVIGDDGLQHYSLGRDLEIALLDDRHLGNGRCLPAGPLREPKSRLNTVDFVVPKQLRPNEIYQLKNPAKKIDFNELKELTVHAVAGIGNPGYFFKQLETLGANVIAHPFRDHYFYRSEDFNFDDDHLIILTEKDAIKCKQFDDERLFCFSVDAVVPDQFQNDFFRLISNIILRKQAQREGI</sequence>
<name>LPXK_COXBU</name>
<evidence type="ECO:0000255" key="1">
    <source>
        <dbReference type="HAMAP-Rule" id="MF_00409"/>
    </source>
</evidence>
<proteinExistence type="inferred from homology"/>
<accession>Q83D83</accession>
<feature type="chain" id="PRO_0000190923" description="Tetraacyldisaccharide 4'-kinase">
    <location>
        <begin position="1"/>
        <end position="325"/>
    </location>
</feature>
<feature type="binding site" evidence="1">
    <location>
        <begin position="58"/>
        <end position="65"/>
    </location>
    <ligand>
        <name>ATP</name>
        <dbReference type="ChEBI" id="CHEBI:30616"/>
    </ligand>
</feature>
<keyword id="KW-0067">ATP-binding</keyword>
<keyword id="KW-0418">Kinase</keyword>
<keyword id="KW-0441">Lipid A biosynthesis</keyword>
<keyword id="KW-0444">Lipid biosynthesis</keyword>
<keyword id="KW-0443">Lipid metabolism</keyword>
<keyword id="KW-0547">Nucleotide-binding</keyword>
<keyword id="KW-1185">Reference proteome</keyword>
<keyword id="KW-0808">Transferase</keyword>
<comment type="function">
    <text evidence="1">Transfers the gamma-phosphate of ATP to the 4'-position of a tetraacyldisaccharide 1-phosphate intermediate (termed DS-1-P) to form tetraacyldisaccharide 1,4'-bis-phosphate (lipid IVA).</text>
</comment>
<comment type="catalytic activity">
    <reaction evidence="1">
        <text>a lipid A disaccharide + ATP = a lipid IVA + ADP + H(+)</text>
        <dbReference type="Rhea" id="RHEA:67840"/>
        <dbReference type="ChEBI" id="CHEBI:15378"/>
        <dbReference type="ChEBI" id="CHEBI:30616"/>
        <dbReference type="ChEBI" id="CHEBI:176343"/>
        <dbReference type="ChEBI" id="CHEBI:176425"/>
        <dbReference type="ChEBI" id="CHEBI:456216"/>
        <dbReference type="EC" id="2.7.1.130"/>
    </reaction>
</comment>
<comment type="pathway">
    <text evidence="1">Glycolipid biosynthesis; lipid IV(A) biosynthesis; lipid IV(A) from (3R)-3-hydroxytetradecanoyl-[acyl-carrier-protein] and UDP-N-acetyl-alpha-D-glucosamine: step 6/6.</text>
</comment>
<comment type="similarity">
    <text evidence="1">Belongs to the LpxK family.</text>
</comment>
<organism>
    <name type="scientific">Coxiella burnetii (strain RSA 493 / Nine Mile phase I)</name>
    <dbReference type="NCBI Taxonomy" id="227377"/>
    <lineage>
        <taxon>Bacteria</taxon>
        <taxon>Pseudomonadati</taxon>
        <taxon>Pseudomonadota</taxon>
        <taxon>Gammaproteobacteria</taxon>
        <taxon>Legionellales</taxon>
        <taxon>Coxiellaceae</taxon>
        <taxon>Coxiella</taxon>
    </lineage>
</organism>
<dbReference type="EC" id="2.7.1.130" evidence="1"/>
<dbReference type="EMBL" id="AE016828">
    <property type="protein sequence ID" value="AAO90390.1"/>
    <property type="molecule type" value="Genomic_DNA"/>
</dbReference>
<dbReference type="RefSeq" id="NP_819876.1">
    <property type="nucleotide sequence ID" value="NC_002971.4"/>
</dbReference>
<dbReference type="RefSeq" id="WP_010957852.1">
    <property type="nucleotide sequence ID" value="NC_002971.4"/>
</dbReference>
<dbReference type="SMR" id="Q83D83"/>
<dbReference type="STRING" id="227377.CBU_0857"/>
<dbReference type="EnsemblBacteria" id="AAO90390">
    <property type="protein sequence ID" value="AAO90390"/>
    <property type="gene ID" value="CBU_0857"/>
</dbReference>
<dbReference type="GeneID" id="1208750"/>
<dbReference type="KEGG" id="cbu:CBU_0857"/>
<dbReference type="PATRIC" id="fig|227377.7.peg.843"/>
<dbReference type="eggNOG" id="COG1663">
    <property type="taxonomic scope" value="Bacteria"/>
</dbReference>
<dbReference type="HOGENOM" id="CLU_038816_2_0_6"/>
<dbReference type="OrthoDB" id="9766423at2"/>
<dbReference type="UniPathway" id="UPA00359">
    <property type="reaction ID" value="UER00482"/>
</dbReference>
<dbReference type="Proteomes" id="UP000002671">
    <property type="component" value="Chromosome"/>
</dbReference>
<dbReference type="GO" id="GO:0005886">
    <property type="term" value="C:plasma membrane"/>
    <property type="evidence" value="ECO:0000318"/>
    <property type="project" value="GO_Central"/>
</dbReference>
<dbReference type="GO" id="GO:0005524">
    <property type="term" value="F:ATP binding"/>
    <property type="evidence" value="ECO:0007669"/>
    <property type="project" value="UniProtKB-UniRule"/>
</dbReference>
<dbReference type="GO" id="GO:0009029">
    <property type="term" value="F:tetraacyldisaccharide 4'-kinase activity"/>
    <property type="evidence" value="ECO:0000318"/>
    <property type="project" value="GO_Central"/>
</dbReference>
<dbReference type="GO" id="GO:0009245">
    <property type="term" value="P:lipid A biosynthetic process"/>
    <property type="evidence" value="ECO:0000318"/>
    <property type="project" value="GO_Central"/>
</dbReference>
<dbReference type="GO" id="GO:0009244">
    <property type="term" value="P:lipopolysaccharide core region biosynthetic process"/>
    <property type="evidence" value="ECO:0000318"/>
    <property type="project" value="GO_Central"/>
</dbReference>
<dbReference type="CDD" id="cd01983">
    <property type="entry name" value="SIMIBI"/>
    <property type="match status" value="1"/>
</dbReference>
<dbReference type="HAMAP" id="MF_00409">
    <property type="entry name" value="LpxK"/>
    <property type="match status" value="1"/>
</dbReference>
<dbReference type="InterPro" id="IPR003758">
    <property type="entry name" value="LpxK"/>
</dbReference>
<dbReference type="InterPro" id="IPR027417">
    <property type="entry name" value="P-loop_NTPase"/>
</dbReference>
<dbReference type="NCBIfam" id="TIGR00682">
    <property type="entry name" value="lpxK"/>
    <property type="match status" value="1"/>
</dbReference>
<dbReference type="PANTHER" id="PTHR42724">
    <property type="entry name" value="TETRAACYLDISACCHARIDE 4'-KINASE"/>
    <property type="match status" value="1"/>
</dbReference>
<dbReference type="PANTHER" id="PTHR42724:SF1">
    <property type="entry name" value="TETRAACYLDISACCHARIDE 4'-KINASE, MITOCHONDRIAL-RELATED"/>
    <property type="match status" value="1"/>
</dbReference>
<dbReference type="Pfam" id="PF02606">
    <property type="entry name" value="LpxK"/>
    <property type="match status" value="1"/>
</dbReference>
<dbReference type="SUPFAM" id="SSF52540">
    <property type="entry name" value="P-loop containing nucleoside triphosphate hydrolases"/>
    <property type="match status" value="1"/>
</dbReference>